<accession>O22504</accession>
<sequence>MASLTDLINLDLSDTTDKFIAEYIWIDAVGGLRSKARTLSGPVDDPTKLPKWNFDGSSTGQGPGDDSEVIIYPQAIFKDPFRRGNHILVMCDTYTPAGEPIPTNKRCNAAKIFSHPDVAAEVPWFGIEQEYTLLKKEVNCPIGCPTGGYPGPQGPYYCGIGADKAFGRDIVDAHYKACLYAGINISGINGEVMPGQWEFQVGPAVGISAGDELWVARYILERITEIAGVVVSLDPKPIPGDWNGAGAHTNYSTKSMRNEGGFEIIKKAIAKLETKHAQHIAAYGEGNERRLTGKHETASIHKFSWGVANRGASVRVGRDTEKEGKGYFEDRRPASNMEPYVVTSMIAETTIL</sequence>
<gene>
    <name type="primary">GLN1</name>
</gene>
<proteinExistence type="evidence at transcript level"/>
<feature type="chain" id="PRO_0000153170" description="Glutamine synthetase cytosolic isozyme">
    <location>
        <begin position="1"/>
        <end position="352"/>
    </location>
</feature>
<feature type="domain" description="GS beta-grasp" evidence="2">
    <location>
        <begin position="19"/>
        <end position="98"/>
    </location>
</feature>
<feature type="domain" description="GS catalytic" evidence="3">
    <location>
        <begin position="105"/>
        <end position="352"/>
    </location>
</feature>
<organism>
    <name type="scientific">Daucus carota</name>
    <name type="common">Wild carrot</name>
    <dbReference type="NCBI Taxonomy" id="4039"/>
    <lineage>
        <taxon>Eukaryota</taxon>
        <taxon>Viridiplantae</taxon>
        <taxon>Streptophyta</taxon>
        <taxon>Embryophyta</taxon>
        <taxon>Tracheophyta</taxon>
        <taxon>Spermatophyta</taxon>
        <taxon>Magnoliopsida</taxon>
        <taxon>eudicotyledons</taxon>
        <taxon>Gunneridae</taxon>
        <taxon>Pentapetalae</taxon>
        <taxon>asterids</taxon>
        <taxon>campanulids</taxon>
        <taxon>Apiales</taxon>
        <taxon>Apiaceae</taxon>
        <taxon>Apioideae</taxon>
        <taxon>Scandiceae</taxon>
        <taxon>Daucinae</taxon>
        <taxon>Daucus</taxon>
        <taxon>Daucus sect. Daucus</taxon>
    </lineage>
</organism>
<protein>
    <recommendedName>
        <fullName>Glutamine synthetase cytosolic isozyme</fullName>
        <ecNumber>6.3.1.2</ecNumber>
    </recommendedName>
    <alternativeName>
        <fullName>GS1</fullName>
    </alternativeName>
    <alternativeName>
        <fullName>Glutamate--ammonia ligase</fullName>
    </alternativeName>
</protein>
<name>GLNA1_DAUCA</name>
<dbReference type="EC" id="6.3.1.2"/>
<dbReference type="EMBL" id="AF019559">
    <property type="protein sequence ID" value="AAB71691.1"/>
    <property type="molecule type" value="mRNA"/>
</dbReference>
<dbReference type="PIR" id="T14290">
    <property type="entry name" value="T14290"/>
</dbReference>
<dbReference type="SMR" id="O22504"/>
<dbReference type="GO" id="GO:0005737">
    <property type="term" value="C:cytoplasm"/>
    <property type="evidence" value="ECO:0007669"/>
    <property type="project" value="UniProtKB-SubCell"/>
</dbReference>
<dbReference type="GO" id="GO:0005524">
    <property type="term" value="F:ATP binding"/>
    <property type="evidence" value="ECO:0007669"/>
    <property type="project" value="UniProtKB-KW"/>
</dbReference>
<dbReference type="GO" id="GO:0004356">
    <property type="term" value="F:glutamine synthetase activity"/>
    <property type="evidence" value="ECO:0007669"/>
    <property type="project" value="UniProtKB-EC"/>
</dbReference>
<dbReference type="GO" id="GO:0006542">
    <property type="term" value="P:glutamine biosynthetic process"/>
    <property type="evidence" value="ECO:0007669"/>
    <property type="project" value="InterPro"/>
</dbReference>
<dbReference type="FunFam" id="3.30.590.10:FF:000004">
    <property type="entry name" value="Glutamine synthetase"/>
    <property type="match status" value="1"/>
</dbReference>
<dbReference type="Gene3D" id="3.10.20.70">
    <property type="entry name" value="Glutamine synthetase, N-terminal domain"/>
    <property type="match status" value="1"/>
</dbReference>
<dbReference type="Gene3D" id="3.30.590.10">
    <property type="entry name" value="Glutamine synthetase/guanido kinase, catalytic domain"/>
    <property type="match status" value="2"/>
</dbReference>
<dbReference type="InterPro" id="IPR008147">
    <property type="entry name" value="Gln_synt_N"/>
</dbReference>
<dbReference type="InterPro" id="IPR036651">
    <property type="entry name" value="Gln_synt_N_sf"/>
</dbReference>
<dbReference type="InterPro" id="IPR014746">
    <property type="entry name" value="Gln_synth/guanido_kin_cat_dom"/>
</dbReference>
<dbReference type="InterPro" id="IPR008146">
    <property type="entry name" value="Gln_synth_cat_dom"/>
</dbReference>
<dbReference type="InterPro" id="IPR027303">
    <property type="entry name" value="Gln_synth_gly_rich_site"/>
</dbReference>
<dbReference type="InterPro" id="IPR027302">
    <property type="entry name" value="Gln_synth_N_conserv_site"/>
</dbReference>
<dbReference type="InterPro" id="IPR050292">
    <property type="entry name" value="Glutamine_Synthetase"/>
</dbReference>
<dbReference type="PANTHER" id="PTHR20852">
    <property type="entry name" value="GLUTAMINE SYNTHETASE"/>
    <property type="match status" value="1"/>
</dbReference>
<dbReference type="PANTHER" id="PTHR20852:SF86">
    <property type="entry name" value="GLUTAMINE SYNTHETASE CYTOSOLIC ISOZYME 1-3"/>
    <property type="match status" value="1"/>
</dbReference>
<dbReference type="Pfam" id="PF00120">
    <property type="entry name" value="Gln-synt_C"/>
    <property type="match status" value="1"/>
</dbReference>
<dbReference type="Pfam" id="PF03951">
    <property type="entry name" value="Gln-synt_N"/>
    <property type="match status" value="1"/>
</dbReference>
<dbReference type="SMART" id="SM01230">
    <property type="entry name" value="Gln-synt_C"/>
    <property type="match status" value="1"/>
</dbReference>
<dbReference type="SUPFAM" id="SSF54368">
    <property type="entry name" value="Glutamine synthetase, N-terminal domain"/>
    <property type="match status" value="1"/>
</dbReference>
<dbReference type="SUPFAM" id="SSF55931">
    <property type="entry name" value="Glutamine synthetase/guanido kinase"/>
    <property type="match status" value="1"/>
</dbReference>
<dbReference type="PROSITE" id="PS00180">
    <property type="entry name" value="GLNA_1"/>
    <property type="match status" value="1"/>
</dbReference>
<dbReference type="PROSITE" id="PS00181">
    <property type="entry name" value="GLNA_ATP"/>
    <property type="match status" value="1"/>
</dbReference>
<dbReference type="PROSITE" id="PS51986">
    <property type="entry name" value="GS_BETA_GRASP"/>
    <property type="match status" value="1"/>
</dbReference>
<dbReference type="PROSITE" id="PS51987">
    <property type="entry name" value="GS_CATALYTIC"/>
    <property type="match status" value="1"/>
</dbReference>
<evidence type="ECO:0000250" key="1"/>
<evidence type="ECO:0000255" key="2">
    <source>
        <dbReference type="PROSITE-ProRule" id="PRU01330"/>
    </source>
</evidence>
<evidence type="ECO:0000255" key="3">
    <source>
        <dbReference type="PROSITE-ProRule" id="PRU01331"/>
    </source>
</evidence>
<evidence type="ECO:0000305" key="4"/>
<comment type="catalytic activity">
    <reaction>
        <text>L-glutamate + NH4(+) + ATP = L-glutamine + ADP + phosphate + H(+)</text>
        <dbReference type="Rhea" id="RHEA:16169"/>
        <dbReference type="ChEBI" id="CHEBI:15378"/>
        <dbReference type="ChEBI" id="CHEBI:28938"/>
        <dbReference type="ChEBI" id="CHEBI:29985"/>
        <dbReference type="ChEBI" id="CHEBI:30616"/>
        <dbReference type="ChEBI" id="CHEBI:43474"/>
        <dbReference type="ChEBI" id="CHEBI:58359"/>
        <dbReference type="ChEBI" id="CHEBI:456216"/>
        <dbReference type="EC" id="6.3.1.2"/>
    </reaction>
</comment>
<comment type="subunit">
    <text evidence="1">Homooctamer.</text>
</comment>
<comment type="subcellular location">
    <subcellularLocation>
        <location evidence="1">Cytoplasm</location>
    </subcellularLocation>
</comment>
<comment type="similarity">
    <text evidence="4">Belongs to the glutamine synthetase family.</text>
</comment>
<keyword id="KW-0067">ATP-binding</keyword>
<keyword id="KW-0963">Cytoplasm</keyword>
<keyword id="KW-0436">Ligase</keyword>
<keyword id="KW-0547">Nucleotide-binding</keyword>
<reference key="1">
    <citation type="submission" date="1997-08" db="EMBL/GenBank/DDBJ databases">
        <authorList>
            <person name="Higashi K."/>
            <person name="Kamada H."/>
        </authorList>
    </citation>
    <scope>NUCLEOTIDE SEQUENCE [MRNA]</scope>
    <source>
        <strain>cv. US-Harumakigosun</strain>
    </source>
</reference>